<keyword id="KW-0067">ATP-binding</keyword>
<keyword id="KW-0227">DNA damage</keyword>
<keyword id="KW-0234">DNA repair</keyword>
<keyword id="KW-0238">DNA-binding</keyword>
<keyword id="KW-0547">Nucleotide-binding</keyword>
<keyword id="KW-1185">Reference proteome</keyword>
<proteinExistence type="inferred from homology"/>
<comment type="function">
    <text evidence="1">This protein is involved in the repair of mismatches in DNA. It is possible that it carries out the mismatch recognition step. This protein has a weak ATPase activity.</text>
</comment>
<comment type="similarity">
    <text evidence="1">Belongs to the DNA mismatch repair MutS family.</text>
</comment>
<comment type="sequence caution" evidence="2">
    <conflict type="erroneous initiation">
        <sequence resource="EMBL-CDS" id="ABC31909"/>
    </conflict>
</comment>
<sequence length="860" mass="96692">MSAIESAIKPQHTPMMQQYLGIKAKHPHQLVFYRMGDFYELFYEDARRAAELLDITLTQRGQSGGQPIPMAGVPFHAAEGYIGRLVRLGESVVICEQVGDPAASKGPVERKVVRVVTPGTLSDEAFLEEKSDNLLLAISAYKDLFGLATLDIAGGRFLIQEVRGVEALASELQRLRPAEILVSEQFPFLTLLENYTGVQKQPPWYFEQETAQRLLCQQFRTKDLAGFDCEGMSAAIEAAGCLFQYAQETQRSQLPHIRTMIRERREDSIILDAASRRNLEIDVNLAGDYRHTLAWVMDKSATAMGSRMLRRWLNRPLRSQEEVRQRQNAIKELLEDYQFEALHETLKQIGDSERILSRVALRSARPRDLARLRDTLTLLPDLQKQMEELNDTHLRRLAKQVSEFPDIADLLSRAIEENPPVVIRDGGVLRQGFDEELDELRSISENAGDYLLEIEKREKERTQLSSLKVGYNRVHGYFIELSRTQSDQAPADYIRRQTLKNAERFITPELKTFEDKALSAKSRALSREKMLYDQILETIVEQLAPLQDSARALSELDVLSNFAERALTLNLVCPDLTDEHMLHIEGGRHPVVEQVSQDPFVPNDLNLQDKHRMLIITGPNMGGKSTYMRQTACIVILAYCGSFVPAAKVVIGPIDRVFTRMGSSDDIAGGRSTFMVEMTETANILHYATRQSLVLMDEVGRGTSTFDGLSLAWACAEHLAREIQAFTLFATHYFELTALPKTHANVANVHLTATEHNDSIVFLHTVHEGPASKSYGIQVAQLAGVPPQVINQAQKQLKQLESGASKPALTAPAPSLQDDLFARVEPSEVETRLQKLDVDSLSPREALNMLYELKTMSENS</sequence>
<gene>
    <name evidence="1" type="primary">mutS</name>
    <name type="ordered locus">HCH_05234</name>
</gene>
<protein>
    <recommendedName>
        <fullName evidence="1">DNA mismatch repair protein MutS</fullName>
    </recommendedName>
</protein>
<feature type="chain" id="PRO_0000335165" description="DNA mismatch repair protein MutS">
    <location>
        <begin position="1"/>
        <end position="860"/>
    </location>
</feature>
<feature type="binding site" evidence="1">
    <location>
        <begin position="618"/>
        <end position="625"/>
    </location>
    <ligand>
        <name>ATP</name>
        <dbReference type="ChEBI" id="CHEBI:30616"/>
    </ligand>
</feature>
<reference key="1">
    <citation type="journal article" date="2005" name="Nucleic Acids Res.">
        <title>Genomic blueprint of Hahella chejuensis, a marine microbe producing an algicidal agent.</title>
        <authorList>
            <person name="Jeong H."/>
            <person name="Yim J.H."/>
            <person name="Lee C."/>
            <person name="Choi S.-H."/>
            <person name="Park Y.K."/>
            <person name="Yoon S.H."/>
            <person name="Hur C.-G."/>
            <person name="Kang H.-Y."/>
            <person name="Kim D."/>
            <person name="Lee H.H."/>
            <person name="Park K.H."/>
            <person name="Park S.-H."/>
            <person name="Park H.-S."/>
            <person name="Lee H.K."/>
            <person name="Oh T.K."/>
            <person name="Kim J.F."/>
        </authorList>
    </citation>
    <scope>NUCLEOTIDE SEQUENCE [LARGE SCALE GENOMIC DNA]</scope>
    <source>
        <strain>KCTC 2396</strain>
    </source>
</reference>
<name>MUTS_HAHCH</name>
<evidence type="ECO:0000255" key="1">
    <source>
        <dbReference type="HAMAP-Rule" id="MF_00096"/>
    </source>
</evidence>
<evidence type="ECO:0000305" key="2"/>
<dbReference type="EMBL" id="CP000155">
    <property type="protein sequence ID" value="ABC31909.1"/>
    <property type="status" value="ALT_INIT"/>
    <property type="molecule type" value="Genomic_DNA"/>
</dbReference>
<dbReference type="RefSeq" id="WP_041599883.1">
    <property type="nucleotide sequence ID" value="NC_007645.1"/>
</dbReference>
<dbReference type="SMR" id="Q2SBR5"/>
<dbReference type="STRING" id="349521.HCH_05234"/>
<dbReference type="KEGG" id="hch:HCH_05234"/>
<dbReference type="eggNOG" id="COG0249">
    <property type="taxonomic scope" value="Bacteria"/>
</dbReference>
<dbReference type="HOGENOM" id="CLU_002472_4_0_6"/>
<dbReference type="OrthoDB" id="9802448at2"/>
<dbReference type="Proteomes" id="UP000000238">
    <property type="component" value="Chromosome"/>
</dbReference>
<dbReference type="GO" id="GO:0005829">
    <property type="term" value="C:cytosol"/>
    <property type="evidence" value="ECO:0007669"/>
    <property type="project" value="TreeGrafter"/>
</dbReference>
<dbReference type="GO" id="GO:0005524">
    <property type="term" value="F:ATP binding"/>
    <property type="evidence" value="ECO:0007669"/>
    <property type="project" value="UniProtKB-UniRule"/>
</dbReference>
<dbReference type="GO" id="GO:0140664">
    <property type="term" value="F:ATP-dependent DNA damage sensor activity"/>
    <property type="evidence" value="ECO:0007669"/>
    <property type="project" value="InterPro"/>
</dbReference>
<dbReference type="GO" id="GO:0003684">
    <property type="term" value="F:damaged DNA binding"/>
    <property type="evidence" value="ECO:0007669"/>
    <property type="project" value="UniProtKB-UniRule"/>
</dbReference>
<dbReference type="GO" id="GO:0030983">
    <property type="term" value="F:mismatched DNA binding"/>
    <property type="evidence" value="ECO:0007669"/>
    <property type="project" value="InterPro"/>
</dbReference>
<dbReference type="GO" id="GO:0006298">
    <property type="term" value="P:mismatch repair"/>
    <property type="evidence" value="ECO:0007669"/>
    <property type="project" value="UniProtKB-UniRule"/>
</dbReference>
<dbReference type="CDD" id="cd03284">
    <property type="entry name" value="ABC_MutS1"/>
    <property type="match status" value="1"/>
</dbReference>
<dbReference type="FunFam" id="1.10.1420.10:FF:000002">
    <property type="entry name" value="DNA mismatch repair protein MutS"/>
    <property type="match status" value="1"/>
</dbReference>
<dbReference type="FunFam" id="3.40.1170.10:FF:000001">
    <property type="entry name" value="DNA mismatch repair protein MutS"/>
    <property type="match status" value="1"/>
</dbReference>
<dbReference type="FunFam" id="3.40.50.300:FF:000283">
    <property type="entry name" value="DNA mismatch repair protein MutS"/>
    <property type="match status" value="1"/>
</dbReference>
<dbReference type="Gene3D" id="1.10.1420.10">
    <property type="match status" value="2"/>
</dbReference>
<dbReference type="Gene3D" id="6.10.140.430">
    <property type="match status" value="1"/>
</dbReference>
<dbReference type="Gene3D" id="3.40.1170.10">
    <property type="entry name" value="DNA repair protein MutS, domain I"/>
    <property type="match status" value="1"/>
</dbReference>
<dbReference type="Gene3D" id="3.30.420.110">
    <property type="entry name" value="MutS, connector domain"/>
    <property type="match status" value="1"/>
</dbReference>
<dbReference type="Gene3D" id="3.40.50.300">
    <property type="entry name" value="P-loop containing nucleotide triphosphate hydrolases"/>
    <property type="match status" value="1"/>
</dbReference>
<dbReference type="HAMAP" id="MF_00096">
    <property type="entry name" value="MutS"/>
    <property type="match status" value="1"/>
</dbReference>
<dbReference type="InterPro" id="IPR005748">
    <property type="entry name" value="DNA_mismatch_repair_MutS"/>
</dbReference>
<dbReference type="InterPro" id="IPR007695">
    <property type="entry name" value="DNA_mismatch_repair_MutS-lik_N"/>
</dbReference>
<dbReference type="InterPro" id="IPR017261">
    <property type="entry name" value="DNA_mismatch_repair_MutS/MSH"/>
</dbReference>
<dbReference type="InterPro" id="IPR000432">
    <property type="entry name" value="DNA_mismatch_repair_MutS_C"/>
</dbReference>
<dbReference type="InterPro" id="IPR007861">
    <property type="entry name" value="DNA_mismatch_repair_MutS_clamp"/>
</dbReference>
<dbReference type="InterPro" id="IPR007696">
    <property type="entry name" value="DNA_mismatch_repair_MutS_core"/>
</dbReference>
<dbReference type="InterPro" id="IPR016151">
    <property type="entry name" value="DNA_mismatch_repair_MutS_N"/>
</dbReference>
<dbReference type="InterPro" id="IPR036187">
    <property type="entry name" value="DNA_mismatch_repair_MutS_sf"/>
</dbReference>
<dbReference type="InterPro" id="IPR007860">
    <property type="entry name" value="DNA_mmatch_repair_MutS_con_dom"/>
</dbReference>
<dbReference type="InterPro" id="IPR045076">
    <property type="entry name" value="MutS"/>
</dbReference>
<dbReference type="InterPro" id="IPR036678">
    <property type="entry name" value="MutS_con_dom_sf"/>
</dbReference>
<dbReference type="InterPro" id="IPR027417">
    <property type="entry name" value="P-loop_NTPase"/>
</dbReference>
<dbReference type="NCBIfam" id="TIGR01070">
    <property type="entry name" value="mutS1"/>
    <property type="match status" value="1"/>
</dbReference>
<dbReference type="NCBIfam" id="NF003810">
    <property type="entry name" value="PRK05399.1"/>
    <property type="match status" value="1"/>
</dbReference>
<dbReference type="PANTHER" id="PTHR11361:SF34">
    <property type="entry name" value="DNA MISMATCH REPAIR PROTEIN MSH1, MITOCHONDRIAL"/>
    <property type="match status" value="1"/>
</dbReference>
<dbReference type="PANTHER" id="PTHR11361">
    <property type="entry name" value="DNA MISMATCH REPAIR PROTEIN MUTS FAMILY MEMBER"/>
    <property type="match status" value="1"/>
</dbReference>
<dbReference type="Pfam" id="PF01624">
    <property type="entry name" value="MutS_I"/>
    <property type="match status" value="1"/>
</dbReference>
<dbReference type="Pfam" id="PF05188">
    <property type="entry name" value="MutS_II"/>
    <property type="match status" value="1"/>
</dbReference>
<dbReference type="Pfam" id="PF05192">
    <property type="entry name" value="MutS_III"/>
    <property type="match status" value="1"/>
</dbReference>
<dbReference type="Pfam" id="PF05190">
    <property type="entry name" value="MutS_IV"/>
    <property type="match status" value="1"/>
</dbReference>
<dbReference type="Pfam" id="PF00488">
    <property type="entry name" value="MutS_V"/>
    <property type="match status" value="1"/>
</dbReference>
<dbReference type="PIRSF" id="PIRSF037677">
    <property type="entry name" value="DNA_mis_repair_Msh6"/>
    <property type="match status" value="1"/>
</dbReference>
<dbReference type="SMART" id="SM00534">
    <property type="entry name" value="MUTSac"/>
    <property type="match status" value="1"/>
</dbReference>
<dbReference type="SMART" id="SM00533">
    <property type="entry name" value="MUTSd"/>
    <property type="match status" value="1"/>
</dbReference>
<dbReference type="SUPFAM" id="SSF55271">
    <property type="entry name" value="DNA repair protein MutS, domain I"/>
    <property type="match status" value="1"/>
</dbReference>
<dbReference type="SUPFAM" id="SSF53150">
    <property type="entry name" value="DNA repair protein MutS, domain II"/>
    <property type="match status" value="1"/>
</dbReference>
<dbReference type="SUPFAM" id="SSF48334">
    <property type="entry name" value="DNA repair protein MutS, domain III"/>
    <property type="match status" value="1"/>
</dbReference>
<dbReference type="SUPFAM" id="SSF52540">
    <property type="entry name" value="P-loop containing nucleoside triphosphate hydrolases"/>
    <property type="match status" value="1"/>
</dbReference>
<dbReference type="PROSITE" id="PS00486">
    <property type="entry name" value="DNA_MISMATCH_REPAIR_2"/>
    <property type="match status" value="1"/>
</dbReference>
<accession>Q2SBR5</accession>
<organism>
    <name type="scientific">Hahella chejuensis (strain KCTC 2396)</name>
    <dbReference type="NCBI Taxonomy" id="349521"/>
    <lineage>
        <taxon>Bacteria</taxon>
        <taxon>Pseudomonadati</taxon>
        <taxon>Pseudomonadota</taxon>
        <taxon>Gammaproteobacteria</taxon>
        <taxon>Oceanospirillales</taxon>
        <taxon>Hahellaceae</taxon>
        <taxon>Hahella</taxon>
    </lineage>
</organism>